<accession>Q8NGN6</accession>
<accession>Q6IFE8</accession>
<gene>
    <name type="primary">OR10G7</name>
</gene>
<evidence type="ECO:0000255" key="1"/>
<evidence type="ECO:0000255" key="2">
    <source>
        <dbReference type="PROSITE-ProRule" id="PRU00521"/>
    </source>
</evidence>
<evidence type="ECO:0000305" key="3"/>
<organism>
    <name type="scientific">Homo sapiens</name>
    <name type="common">Human</name>
    <dbReference type="NCBI Taxonomy" id="9606"/>
    <lineage>
        <taxon>Eukaryota</taxon>
        <taxon>Metazoa</taxon>
        <taxon>Chordata</taxon>
        <taxon>Craniata</taxon>
        <taxon>Vertebrata</taxon>
        <taxon>Euteleostomi</taxon>
        <taxon>Mammalia</taxon>
        <taxon>Eutheria</taxon>
        <taxon>Euarchontoglires</taxon>
        <taxon>Primates</taxon>
        <taxon>Haplorrhini</taxon>
        <taxon>Catarrhini</taxon>
        <taxon>Hominidae</taxon>
        <taxon>Homo</taxon>
    </lineage>
</organism>
<dbReference type="EMBL" id="AB065754">
    <property type="protein sequence ID" value="BAC05974.1"/>
    <property type="molecule type" value="Genomic_DNA"/>
</dbReference>
<dbReference type="EMBL" id="CH471065">
    <property type="protein sequence ID" value="EAW67568.1"/>
    <property type="molecule type" value="Genomic_DNA"/>
</dbReference>
<dbReference type="EMBL" id="BK004314">
    <property type="protein sequence ID" value="DAA04712.1"/>
    <property type="molecule type" value="Genomic_DNA"/>
</dbReference>
<dbReference type="CCDS" id="CCDS31705.1"/>
<dbReference type="RefSeq" id="NP_001004463.1">
    <property type="nucleotide sequence ID" value="NM_001004463.2"/>
</dbReference>
<dbReference type="SMR" id="Q8NGN6"/>
<dbReference type="BioGRID" id="133479">
    <property type="interactions" value="1"/>
</dbReference>
<dbReference type="FunCoup" id="Q8NGN6">
    <property type="interactions" value="523"/>
</dbReference>
<dbReference type="STRING" id="9606.ENSP00000492905"/>
<dbReference type="GlyCosmos" id="Q8NGN6">
    <property type="glycosylation" value="1 site, No reported glycans"/>
</dbReference>
<dbReference type="GlyGen" id="Q8NGN6">
    <property type="glycosylation" value="1 site"/>
</dbReference>
<dbReference type="iPTMnet" id="Q8NGN6"/>
<dbReference type="PhosphoSitePlus" id="Q8NGN6"/>
<dbReference type="BioMuta" id="OR10G7"/>
<dbReference type="DMDM" id="38372736"/>
<dbReference type="PaxDb" id="9606-ENSP00000329689"/>
<dbReference type="PeptideAtlas" id="Q8NGN6"/>
<dbReference type="Antibodypedia" id="56785">
    <property type="antibodies" value="45 antibodies from 15 providers"/>
</dbReference>
<dbReference type="DNASU" id="390265"/>
<dbReference type="Ensembl" id="ENST00000641585.1">
    <property type="protein sequence ID" value="ENSP00000492905.1"/>
    <property type="gene ID" value="ENSG00000182634.9"/>
</dbReference>
<dbReference type="GeneID" id="390265"/>
<dbReference type="KEGG" id="hsa:390265"/>
<dbReference type="MANE-Select" id="ENST00000641585.1">
    <property type="protein sequence ID" value="ENSP00000492905.1"/>
    <property type="RefSeq nucleotide sequence ID" value="NM_001004463.2"/>
    <property type="RefSeq protein sequence ID" value="NP_001004463.1"/>
</dbReference>
<dbReference type="UCSC" id="uc001pzq.2">
    <property type="organism name" value="human"/>
</dbReference>
<dbReference type="AGR" id="HGNC:14842"/>
<dbReference type="CTD" id="390265"/>
<dbReference type="DisGeNET" id="390265"/>
<dbReference type="GeneCards" id="OR10G7"/>
<dbReference type="HGNC" id="HGNC:14842">
    <property type="gene designation" value="OR10G7"/>
</dbReference>
<dbReference type="HPA" id="ENSG00000182634">
    <property type="expression patterns" value="Not detected"/>
</dbReference>
<dbReference type="neXtProt" id="NX_Q8NGN6"/>
<dbReference type="OpenTargets" id="ENSG00000182634"/>
<dbReference type="PharmGKB" id="PA31974"/>
<dbReference type="VEuPathDB" id="HostDB:ENSG00000182634"/>
<dbReference type="eggNOG" id="ENOG502SI4A">
    <property type="taxonomic scope" value="Eukaryota"/>
</dbReference>
<dbReference type="GeneTree" id="ENSGT01050000244869"/>
<dbReference type="HOGENOM" id="CLU_012526_8_1_1"/>
<dbReference type="InParanoid" id="Q8NGN6"/>
<dbReference type="OMA" id="VIMINVG"/>
<dbReference type="OrthoDB" id="9045771at2759"/>
<dbReference type="PAN-GO" id="Q8NGN6">
    <property type="GO annotations" value="1 GO annotation based on evolutionary models"/>
</dbReference>
<dbReference type="PhylomeDB" id="Q8NGN6"/>
<dbReference type="TreeFam" id="TF337251"/>
<dbReference type="PathwayCommons" id="Q8NGN6"/>
<dbReference type="Reactome" id="R-HSA-381753">
    <property type="pathway name" value="Olfactory Signaling Pathway"/>
</dbReference>
<dbReference type="Reactome" id="R-HSA-9752946">
    <property type="pathway name" value="Expression and translocation of olfactory receptors"/>
</dbReference>
<dbReference type="BioGRID-ORCS" id="390265">
    <property type="hits" value="8 hits in 689 CRISPR screens"/>
</dbReference>
<dbReference type="GeneWiki" id="OR10G7"/>
<dbReference type="GenomeRNAi" id="390265"/>
<dbReference type="Pharos" id="Q8NGN6">
    <property type="development level" value="Tdark"/>
</dbReference>
<dbReference type="PRO" id="PR:Q8NGN6"/>
<dbReference type="Proteomes" id="UP000005640">
    <property type="component" value="Chromosome 11"/>
</dbReference>
<dbReference type="RNAct" id="Q8NGN6">
    <property type="molecule type" value="protein"/>
</dbReference>
<dbReference type="ExpressionAtlas" id="Q8NGN6">
    <property type="expression patterns" value="baseline and differential"/>
</dbReference>
<dbReference type="GO" id="GO:0005886">
    <property type="term" value="C:plasma membrane"/>
    <property type="evidence" value="ECO:0000318"/>
    <property type="project" value="GO_Central"/>
</dbReference>
<dbReference type="GO" id="GO:0004930">
    <property type="term" value="F:G protein-coupled receptor activity"/>
    <property type="evidence" value="ECO:0007669"/>
    <property type="project" value="UniProtKB-KW"/>
</dbReference>
<dbReference type="GO" id="GO:0004984">
    <property type="term" value="F:olfactory receptor activity"/>
    <property type="evidence" value="ECO:0000318"/>
    <property type="project" value="GO_Central"/>
</dbReference>
<dbReference type="GO" id="GO:0050911">
    <property type="term" value="P:detection of chemical stimulus involved in sensory perception of smell"/>
    <property type="evidence" value="ECO:0000318"/>
    <property type="project" value="GO_Central"/>
</dbReference>
<dbReference type="CDD" id="cd15916">
    <property type="entry name" value="7tmA_OR10G-like"/>
    <property type="match status" value="1"/>
</dbReference>
<dbReference type="FunFam" id="1.10.1220.70:FF:000001">
    <property type="entry name" value="Olfactory receptor"/>
    <property type="match status" value="1"/>
</dbReference>
<dbReference type="FunFam" id="1.20.1070.10:FF:000001">
    <property type="entry name" value="Olfactory receptor"/>
    <property type="match status" value="1"/>
</dbReference>
<dbReference type="Gene3D" id="1.20.1070.10">
    <property type="entry name" value="Rhodopsin 7-helix transmembrane proteins"/>
    <property type="match status" value="1"/>
</dbReference>
<dbReference type="InterPro" id="IPR000276">
    <property type="entry name" value="GPCR_Rhodpsn"/>
</dbReference>
<dbReference type="InterPro" id="IPR017452">
    <property type="entry name" value="GPCR_Rhodpsn_7TM"/>
</dbReference>
<dbReference type="InterPro" id="IPR000725">
    <property type="entry name" value="Olfact_rcpt"/>
</dbReference>
<dbReference type="PANTHER" id="PTHR26453">
    <property type="entry name" value="OLFACTORY RECEPTOR"/>
    <property type="match status" value="1"/>
</dbReference>
<dbReference type="Pfam" id="PF13853">
    <property type="entry name" value="7tm_4"/>
    <property type="match status" value="1"/>
</dbReference>
<dbReference type="PRINTS" id="PR00237">
    <property type="entry name" value="GPCRRHODOPSN"/>
</dbReference>
<dbReference type="PRINTS" id="PR00245">
    <property type="entry name" value="OLFACTORYR"/>
</dbReference>
<dbReference type="SUPFAM" id="SSF81321">
    <property type="entry name" value="Family A G protein-coupled receptor-like"/>
    <property type="match status" value="1"/>
</dbReference>
<dbReference type="PROSITE" id="PS50262">
    <property type="entry name" value="G_PROTEIN_RECEP_F1_2"/>
    <property type="match status" value="1"/>
</dbReference>
<feature type="chain" id="PRO_0000150699" description="Olfactory receptor 10G7">
    <location>
        <begin position="1"/>
        <end position="311"/>
    </location>
</feature>
<feature type="topological domain" description="Extracellular" evidence="1">
    <location>
        <begin position="1"/>
        <end position="23"/>
    </location>
</feature>
<feature type="transmembrane region" description="Helical; Name=1" evidence="1">
    <location>
        <begin position="24"/>
        <end position="44"/>
    </location>
</feature>
<feature type="topological domain" description="Cytoplasmic" evidence="1">
    <location>
        <begin position="45"/>
        <end position="52"/>
    </location>
</feature>
<feature type="transmembrane region" description="Helical; Name=2" evidence="1">
    <location>
        <begin position="53"/>
        <end position="73"/>
    </location>
</feature>
<feature type="topological domain" description="Extracellular" evidence="1">
    <location>
        <begin position="74"/>
        <end position="98"/>
    </location>
</feature>
<feature type="transmembrane region" description="Helical; Name=3" evidence="1">
    <location>
        <begin position="99"/>
        <end position="119"/>
    </location>
</feature>
<feature type="topological domain" description="Cytoplasmic" evidence="1">
    <location>
        <begin position="120"/>
        <end position="138"/>
    </location>
</feature>
<feature type="transmembrane region" description="Helical; Name=4" evidence="1">
    <location>
        <begin position="139"/>
        <end position="159"/>
    </location>
</feature>
<feature type="topological domain" description="Extracellular" evidence="1">
    <location>
        <begin position="160"/>
        <end position="196"/>
    </location>
</feature>
<feature type="transmembrane region" description="Helical; Name=5" evidence="1">
    <location>
        <begin position="197"/>
        <end position="216"/>
    </location>
</feature>
<feature type="topological domain" description="Cytoplasmic" evidence="1">
    <location>
        <begin position="217"/>
        <end position="236"/>
    </location>
</feature>
<feature type="transmembrane region" description="Helical; Name=6" evidence="1">
    <location>
        <begin position="237"/>
        <end position="257"/>
    </location>
</feature>
<feature type="topological domain" description="Extracellular" evidence="1">
    <location>
        <begin position="258"/>
        <end position="268"/>
    </location>
</feature>
<feature type="transmembrane region" description="Helical; Name=7" evidence="1">
    <location>
        <begin position="269"/>
        <end position="289"/>
    </location>
</feature>
<feature type="topological domain" description="Cytoplasmic" evidence="1">
    <location>
        <begin position="290"/>
        <end position="311"/>
    </location>
</feature>
<feature type="glycosylation site" description="N-linked (GlcNAc...) asparagine" evidence="1">
    <location>
        <position position="3"/>
    </location>
</feature>
<feature type="disulfide bond" evidence="2">
    <location>
        <begin position="96"/>
        <end position="188"/>
    </location>
</feature>
<feature type="sequence variant" id="VAR_024126" description="In dbSNP:rs3894197.">
    <original>T</original>
    <variation>S</variation>
    <location>
        <position position="5"/>
    </location>
</feature>
<feature type="sequence variant" id="VAR_048060" description="In dbSNP:rs11827843.">
    <original>T</original>
    <variation>M</variation>
    <location>
        <position position="13"/>
    </location>
</feature>
<feature type="sequence variant" id="VAR_048061" description="In dbSNP:rs3894198.">
    <original>A</original>
    <variation>V</variation>
    <location>
        <position position="18"/>
    </location>
</feature>
<feature type="sequence variant" id="VAR_048062" description="In dbSNP:rs3894199.">
    <original>G</original>
    <variation>A</variation>
    <location>
        <position position="20"/>
    </location>
</feature>
<feature type="sequence variant" id="VAR_048063" description="In dbSNP:rs11219420.">
    <original>I</original>
    <variation>V</variation>
    <location>
        <position position="28"/>
    </location>
</feature>
<feature type="sequence variant" id="VAR_048064" description="In dbSNP:rs470208.">
    <original>T</original>
    <variation>A</variation>
    <location>
        <position position="90"/>
    </location>
</feature>
<feature type="sequence variant" id="VAR_034285" description="In dbSNP:rs513591.">
    <original>T</original>
    <variation>S</variation>
    <location>
        <position position="136"/>
    </location>
</feature>
<protein>
    <recommendedName>
        <fullName>Olfactory receptor 10G7</fullName>
    </recommendedName>
    <alternativeName>
        <fullName>Olfactory receptor OR11-283</fullName>
    </alternativeName>
</protein>
<sequence>MSNATLLTAFILTGLPHAPGLDAPLFGIFLVVYVLTVLGNLLILLVIRVDSHLHTPMYYFLTNLSFIDMWFSTVTVPKMLMTLVSPSGRTISFHSCVAQLYFFHFLGSTECFLYTVMSYDRYLAISYPLRYTNMMTGRSCALLATGTWLSGSLHSAVQTILTFHLPYCGPNQIQHYFCDAPPILKLACADTSANEMVIFVNIGLVASGCFVLIVLSYVSIVCSILRIRTSEGRHRAFQTCASHCIVVLCFFGPGLFIYLRPGSRDALHGVVAVFYTTLTPLFNPVVYTLRNKEVKKALLKLKNGSVFAQGE</sequence>
<proteinExistence type="inferred from homology"/>
<comment type="function">
    <text evidence="3">Odorant receptor.</text>
</comment>
<comment type="subcellular location">
    <subcellularLocation>
        <location>Cell membrane</location>
        <topology>Multi-pass membrane protein</topology>
    </subcellularLocation>
</comment>
<comment type="similarity">
    <text evidence="2">Belongs to the G-protein coupled receptor 1 family.</text>
</comment>
<comment type="online information" name="Human Olfactory Receptor Data Exploratorium (HORDE)">
    <link uri="http://genome.weizmann.ac.il/horde/card/index/symbol:OR10G7"/>
</comment>
<reference key="1">
    <citation type="submission" date="2001-07" db="EMBL/GenBank/DDBJ databases">
        <title>Genome-wide discovery and analysis of human seven transmembrane helix receptor genes.</title>
        <authorList>
            <person name="Suwa M."/>
            <person name="Sato T."/>
            <person name="Okouchi I."/>
            <person name="Arita M."/>
            <person name="Futami K."/>
            <person name="Matsumoto S."/>
            <person name="Tsutsumi S."/>
            <person name="Aburatani H."/>
            <person name="Asai K."/>
            <person name="Akiyama Y."/>
        </authorList>
    </citation>
    <scope>NUCLEOTIDE SEQUENCE [GENOMIC DNA]</scope>
</reference>
<reference key="2">
    <citation type="submission" date="2005-07" db="EMBL/GenBank/DDBJ databases">
        <authorList>
            <person name="Mural R.J."/>
            <person name="Istrail S."/>
            <person name="Sutton G.G."/>
            <person name="Florea L."/>
            <person name="Halpern A.L."/>
            <person name="Mobarry C.M."/>
            <person name="Lippert R."/>
            <person name="Walenz B."/>
            <person name="Shatkay H."/>
            <person name="Dew I."/>
            <person name="Miller J.R."/>
            <person name="Flanigan M.J."/>
            <person name="Edwards N.J."/>
            <person name="Bolanos R."/>
            <person name="Fasulo D."/>
            <person name="Halldorsson B.V."/>
            <person name="Hannenhalli S."/>
            <person name="Turner R."/>
            <person name="Yooseph S."/>
            <person name="Lu F."/>
            <person name="Nusskern D.R."/>
            <person name="Shue B.C."/>
            <person name="Zheng X.H."/>
            <person name="Zhong F."/>
            <person name="Delcher A.L."/>
            <person name="Huson D.H."/>
            <person name="Kravitz S.A."/>
            <person name="Mouchard L."/>
            <person name="Reinert K."/>
            <person name="Remington K.A."/>
            <person name="Clark A.G."/>
            <person name="Waterman M.S."/>
            <person name="Eichler E.E."/>
            <person name="Adams M.D."/>
            <person name="Hunkapiller M.W."/>
            <person name="Myers E.W."/>
            <person name="Venter J.C."/>
        </authorList>
    </citation>
    <scope>NUCLEOTIDE SEQUENCE [LARGE SCALE GENOMIC DNA]</scope>
</reference>
<reference key="3">
    <citation type="journal article" date="2004" name="Proc. Natl. Acad. Sci. U.S.A.">
        <title>The human olfactory receptor gene family.</title>
        <authorList>
            <person name="Malnic B."/>
            <person name="Godfrey P.A."/>
            <person name="Buck L.B."/>
        </authorList>
    </citation>
    <scope>IDENTIFICATION</scope>
</reference>
<reference key="4">
    <citation type="journal article" date="2004" name="Proc. Natl. Acad. Sci. U.S.A.">
        <authorList>
            <person name="Malnic B."/>
            <person name="Godfrey P.A."/>
            <person name="Buck L.B."/>
        </authorList>
    </citation>
    <scope>ERRATUM OF PUBMED:14983052</scope>
</reference>
<keyword id="KW-1003">Cell membrane</keyword>
<keyword id="KW-1015">Disulfide bond</keyword>
<keyword id="KW-0297">G-protein coupled receptor</keyword>
<keyword id="KW-0325">Glycoprotein</keyword>
<keyword id="KW-0472">Membrane</keyword>
<keyword id="KW-0552">Olfaction</keyword>
<keyword id="KW-0675">Receptor</keyword>
<keyword id="KW-1185">Reference proteome</keyword>
<keyword id="KW-0716">Sensory transduction</keyword>
<keyword id="KW-0807">Transducer</keyword>
<keyword id="KW-0812">Transmembrane</keyword>
<keyword id="KW-1133">Transmembrane helix</keyword>
<name>O10G7_HUMAN</name>